<protein>
    <recommendedName>
        <fullName evidence="1">Adenine deaminase</fullName>
        <shortName evidence="1">Adenase</shortName>
        <shortName evidence="1">Adenine aminase</shortName>
        <ecNumber evidence="1">3.5.4.2</ecNumber>
    </recommendedName>
</protein>
<proteinExistence type="inferred from homology"/>
<sequence length="603" mass="64506">MSSNAQVRRRAVQAARGESPFDLLLIDAQIVDMATGEIRPADVGIVGEMIASVHPRGSREDAHEVRSLAGGYLSPGLMDTHVHLESSHLPPERYAEIVLTQGTTAVFWDPHELANVLGVAGVRYAVDASRHLPLQVMVAAPSSVPSTPGLEMSGADFAGAEMETMLGWPEVRGVAEVMDMHGVLHGSERMQEIVQAGLNSGKLIEGHARGLSGADLQAYLAAGVTSDHELTSADDALEKLRAGLTIEIRGSHPYLLPDIVAALKTLPHLSSQITVCTDDVPPDILLEKGGIIALLNLLIEHGLPAVDALRFATLNAAIRLQRHDLGLIAAGRRADLVVFDSLEKLVAREVYIGGKLLARAGNLLTPIAPAAGVTPPRDTLQIAPLRADDFILRVQGIRHGIARLRHIRGARFTQWGEVEVQVRDGIVQLPAGFSLIWVKHRHGRHQATPQIALLEGWGELRGAIATSYSHDSHNLVVLGRDANDMALAANQLIASGGGMALAQQGEILAHVAMPIAGMLSDLPAAELARQFRELRDLSSQVADWEPPYRVFKAIEGTCLACNAGPHLTDLGLTDGGSRQIVDPLIACREIPEPTDHNNNPQGA</sequence>
<evidence type="ECO:0000255" key="1">
    <source>
        <dbReference type="HAMAP-Rule" id="MF_01518"/>
    </source>
</evidence>
<organism>
    <name type="scientific">Klebsiella pneumoniae subsp. pneumoniae (strain ATCC 700721 / MGH 78578)</name>
    <dbReference type="NCBI Taxonomy" id="272620"/>
    <lineage>
        <taxon>Bacteria</taxon>
        <taxon>Pseudomonadati</taxon>
        <taxon>Pseudomonadota</taxon>
        <taxon>Gammaproteobacteria</taxon>
        <taxon>Enterobacterales</taxon>
        <taxon>Enterobacteriaceae</taxon>
        <taxon>Klebsiella/Raoultella group</taxon>
        <taxon>Klebsiella</taxon>
        <taxon>Klebsiella pneumoniae complex</taxon>
    </lineage>
</organism>
<comment type="catalytic activity">
    <reaction evidence="1">
        <text>adenine + H2O + H(+) = hypoxanthine + NH4(+)</text>
        <dbReference type="Rhea" id="RHEA:23688"/>
        <dbReference type="ChEBI" id="CHEBI:15377"/>
        <dbReference type="ChEBI" id="CHEBI:15378"/>
        <dbReference type="ChEBI" id="CHEBI:16708"/>
        <dbReference type="ChEBI" id="CHEBI:17368"/>
        <dbReference type="ChEBI" id="CHEBI:28938"/>
        <dbReference type="EC" id="3.5.4.2"/>
    </reaction>
</comment>
<comment type="cofactor">
    <cofactor evidence="1">
        <name>Mn(2+)</name>
        <dbReference type="ChEBI" id="CHEBI:29035"/>
    </cofactor>
</comment>
<comment type="subunit">
    <text evidence="1">Homodimer.</text>
</comment>
<comment type="similarity">
    <text evidence="1">Belongs to the metallo-dependent hydrolases superfamily. Adenine deaminase family.</text>
</comment>
<gene>
    <name evidence="1" type="primary">ade</name>
    <name type="ordered locus">KPN78578_25110</name>
    <name type="ORF">KPN_02554</name>
</gene>
<dbReference type="EC" id="3.5.4.2" evidence="1"/>
<dbReference type="EMBL" id="CP000647">
    <property type="protein sequence ID" value="ABR77972.1"/>
    <property type="molecule type" value="Genomic_DNA"/>
</dbReference>
<dbReference type="RefSeq" id="WP_015958726.1">
    <property type="nucleotide sequence ID" value="NC_009648.1"/>
</dbReference>
<dbReference type="SMR" id="A6TBK1"/>
<dbReference type="STRING" id="272620.KPN_02554"/>
<dbReference type="PaxDb" id="272620-KPN_02554"/>
<dbReference type="EnsemblBacteria" id="ABR77972">
    <property type="protein sequence ID" value="ABR77972"/>
    <property type="gene ID" value="KPN_02554"/>
</dbReference>
<dbReference type="KEGG" id="kpn:KPN_02554"/>
<dbReference type="HOGENOM" id="CLU_027935_0_0_6"/>
<dbReference type="Proteomes" id="UP000000265">
    <property type="component" value="Chromosome"/>
</dbReference>
<dbReference type="GO" id="GO:0000034">
    <property type="term" value="F:adenine deaminase activity"/>
    <property type="evidence" value="ECO:0007669"/>
    <property type="project" value="UniProtKB-UniRule"/>
</dbReference>
<dbReference type="GO" id="GO:0006146">
    <property type="term" value="P:adenine catabolic process"/>
    <property type="evidence" value="ECO:0007669"/>
    <property type="project" value="InterPro"/>
</dbReference>
<dbReference type="Gene3D" id="3.20.20.140">
    <property type="entry name" value="Metal-dependent hydrolases"/>
    <property type="match status" value="1"/>
</dbReference>
<dbReference type="Gene3D" id="2.30.40.10">
    <property type="entry name" value="Urease, subunit C, domain 1"/>
    <property type="match status" value="1"/>
</dbReference>
<dbReference type="HAMAP" id="MF_01518">
    <property type="entry name" value="Adenine_deamin"/>
    <property type="match status" value="1"/>
</dbReference>
<dbReference type="InterPro" id="IPR006679">
    <property type="entry name" value="Adenine_deam"/>
</dbReference>
<dbReference type="InterPro" id="IPR026912">
    <property type="entry name" value="Adenine_deam_C"/>
</dbReference>
<dbReference type="InterPro" id="IPR006680">
    <property type="entry name" value="Amidohydro-rel"/>
</dbReference>
<dbReference type="InterPro" id="IPR011059">
    <property type="entry name" value="Metal-dep_hydrolase_composite"/>
</dbReference>
<dbReference type="InterPro" id="IPR032466">
    <property type="entry name" value="Metal_Hydrolase"/>
</dbReference>
<dbReference type="PANTHER" id="PTHR11113:SF2">
    <property type="entry name" value="ADENINE DEAMINASE"/>
    <property type="match status" value="1"/>
</dbReference>
<dbReference type="PANTHER" id="PTHR11113">
    <property type="entry name" value="N-ACETYLGLUCOSAMINE-6-PHOSPHATE DEACETYLASE"/>
    <property type="match status" value="1"/>
</dbReference>
<dbReference type="Pfam" id="PF13382">
    <property type="entry name" value="Adenine_deam_C"/>
    <property type="match status" value="1"/>
</dbReference>
<dbReference type="Pfam" id="PF01979">
    <property type="entry name" value="Amidohydro_1"/>
    <property type="match status" value="1"/>
</dbReference>
<dbReference type="SUPFAM" id="SSF51338">
    <property type="entry name" value="Composite domain of metallo-dependent hydrolases"/>
    <property type="match status" value="1"/>
</dbReference>
<dbReference type="SUPFAM" id="SSF51556">
    <property type="entry name" value="Metallo-dependent hydrolases"/>
    <property type="match status" value="1"/>
</dbReference>
<reference key="1">
    <citation type="submission" date="2006-09" db="EMBL/GenBank/DDBJ databases">
        <authorList>
            <consortium name="The Klebsiella pneumonia Genome Sequencing Project"/>
            <person name="McClelland M."/>
            <person name="Sanderson E.K."/>
            <person name="Spieth J."/>
            <person name="Clifton W.S."/>
            <person name="Latreille P."/>
            <person name="Sabo A."/>
            <person name="Pepin K."/>
            <person name="Bhonagiri V."/>
            <person name="Porwollik S."/>
            <person name="Ali J."/>
            <person name="Wilson R.K."/>
        </authorList>
    </citation>
    <scope>NUCLEOTIDE SEQUENCE [LARGE SCALE GENOMIC DNA]</scope>
    <source>
        <strain>ATCC 700721 / MGH 78578</strain>
    </source>
</reference>
<name>ADEC_KLEP7</name>
<keyword id="KW-0378">Hydrolase</keyword>
<keyword id="KW-0464">Manganese</keyword>
<accession>A6TBK1</accession>
<feature type="chain" id="PRO_0000318547" description="Adenine deaminase">
    <location>
        <begin position="1"/>
        <end position="603"/>
    </location>
</feature>